<dbReference type="EC" id="1.5.5.2"/>
<dbReference type="EC" id="1.2.1.88"/>
<dbReference type="EMBL" id="AF038838">
    <property type="protein sequence ID" value="AAB95478.1"/>
    <property type="molecule type" value="Genomic_DNA"/>
</dbReference>
<dbReference type="SMR" id="O52485"/>
<dbReference type="STRING" id="548.EAG7_02222"/>
<dbReference type="UniPathway" id="UPA00261">
    <property type="reaction ID" value="UER00373"/>
</dbReference>
<dbReference type="UniPathway" id="UPA00261">
    <property type="reaction ID" value="UER00374"/>
</dbReference>
<dbReference type="GO" id="GO:0009898">
    <property type="term" value="C:cytoplasmic side of plasma membrane"/>
    <property type="evidence" value="ECO:0007669"/>
    <property type="project" value="TreeGrafter"/>
</dbReference>
<dbReference type="GO" id="GO:0003842">
    <property type="term" value="F:1-pyrroline-5-carboxylate dehydrogenase activity"/>
    <property type="evidence" value="ECO:0007669"/>
    <property type="project" value="UniProtKB-EC"/>
</dbReference>
<dbReference type="GO" id="GO:0003700">
    <property type="term" value="F:DNA-binding transcription factor activity"/>
    <property type="evidence" value="ECO:0007669"/>
    <property type="project" value="InterPro"/>
</dbReference>
<dbReference type="GO" id="GO:0004657">
    <property type="term" value="F:proline dehydrogenase activity"/>
    <property type="evidence" value="ECO:0007669"/>
    <property type="project" value="UniProtKB-EC"/>
</dbReference>
<dbReference type="GO" id="GO:0043565">
    <property type="term" value="F:sequence-specific DNA binding"/>
    <property type="evidence" value="ECO:0007669"/>
    <property type="project" value="UniProtKB-ARBA"/>
</dbReference>
<dbReference type="GO" id="GO:0006561">
    <property type="term" value="P:proline biosynthetic process"/>
    <property type="evidence" value="ECO:0007669"/>
    <property type="project" value="InterPro"/>
</dbReference>
<dbReference type="GO" id="GO:0010133">
    <property type="term" value="P:proline catabolic process to glutamate"/>
    <property type="evidence" value="ECO:0007669"/>
    <property type="project" value="UniProtKB-UniPathway"/>
</dbReference>
<dbReference type="CDD" id="cd07125">
    <property type="entry name" value="ALDH_PutA-P5CDH"/>
    <property type="match status" value="1"/>
</dbReference>
<dbReference type="CDD" id="cd22233">
    <property type="entry name" value="RHH_CopAso-like"/>
    <property type="match status" value="1"/>
</dbReference>
<dbReference type="FunFam" id="3.40.309.10:FF:000005">
    <property type="entry name" value="1-pyrroline-5-carboxylate dehydrogenase 1"/>
    <property type="match status" value="1"/>
</dbReference>
<dbReference type="FunFam" id="1.20.5.460:FF:000001">
    <property type="entry name" value="Bifunctional protein PutA"/>
    <property type="match status" value="1"/>
</dbReference>
<dbReference type="FunFam" id="1.20.5.550:FF:000001">
    <property type="entry name" value="Bifunctional protein PutA"/>
    <property type="match status" value="1"/>
</dbReference>
<dbReference type="FunFam" id="3.20.20.220:FF:000004">
    <property type="entry name" value="Bifunctional protein PutA"/>
    <property type="match status" value="1"/>
</dbReference>
<dbReference type="FunFam" id="3.40.605.10:FF:000017">
    <property type="entry name" value="Bifunctional protein PutA"/>
    <property type="match status" value="1"/>
</dbReference>
<dbReference type="Gene3D" id="3.20.20.220">
    <property type="match status" value="1"/>
</dbReference>
<dbReference type="Gene3D" id="3.40.605.10">
    <property type="entry name" value="Aldehyde Dehydrogenase, Chain A, domain 1"/>
    <property type="match status" value="1"/>
</dbReference>
<dbReference type="Gene3D" id="3.40.309.10">
    <property type="entry name" value="Aldehyde Dehydrogenase, Chain A, domain 2"/>
    <property type="match status" value="1"/>
</dbReference>
<dbReference type="Gene3D" id="1.10.1220.10">
    <property type="entry name" value="Met repressor-like"/>
    <property type="match status" value="1"/>
</dbReference>
<dbReference type="Gene3D" id="1.20.5.550">
    <property type="entry name" value="Single Helix bin"/>
    <property type="match status" value="1"/>
</dbReference>
<dbReference type="Gene3D" id="1.20.5.460">
    <property type="entry name" value="Single helix bin"/>
    <property type="match status" value="1"/>
</dbReference>
<dbReference type="InterPro" id="IPR016161">
    <property type="entry name" value="Ald_DH/histidinol_DH"/>
</dbReference>
<dbReference type="InterPro" id="IPR016163">
    <property type="entry name" value="Ald_DH_C"/>
</dbReference>
<dbReference type="InterPro" id="IPR016160">
    <property type="entry name" value="Ald_DH_CS_CYS"/>
</dbReference>
<dbReference type="InterPro" id="IPR029510">
    <property type="entry name" value="Ald_DH_CS_GLU"/>
</dbReference>
<dbReference type="InterPro" id="IPR016162">
    <property type="entry name" value="Ald_DH_N"/>
</dbReference>
<dbReference type="InterPro" id="IPR015590">
    <property type="entry name" value="Aldehyde_DH_dom"/>
</dbReference>
<dbReference type="InterPro" id="IPR013321">
    <property type="entry name" value="Arc_rbn_hlx_hlx"/>
</dbReference>
<dbReference type="InterPro" id="IPR025703">
    <property type="entry name" value="Bifunct_PutA"/>
</dbReference>
<dbReference type="InterPro" id="IPR029041">
    <property type="entry name" value="FAD-linked_oxidoreductase-like"/>
</dbReference>
<dbReference type="InterPro" id="IPR041349">
    <property type="entry name" value="PRODH"/>
</dbReference>
<dbReference type="InterPro" id="IPR024090">
    <property type="entry name" value="PRODH_PutA_dom_I"/>
</dbReference>
<dbReference type="InterPro" id="IPR024089">
    <property type="entry name" value="PRODH_PutA_dom_I/II"/>
</dbReference>
<dbReference type="InterPro" id="IPR024082">
    <property type="entry name" value="PRODH_PutA_dom_II"/>
</dbReference>
<dbReference type="InterPro" id="IPR002872">
    <property type="entry name" value="Proline_DH_dom"/>
</dbReference>
<dbReference type="InterPro" id="IPR050485">
    <property type="entry name" value="Proline_metab_enzyme"/>
</dbReference>
<dbReference type="InterPro" id="IPR005933">
    <property type="entry name" value="PutA_C"/>
</dbReference>
<dbReference type="InterPro" id="IPR048798">
    <property type="entry name" value="PutA_RHH"/>
</dbReference>
<dbReference type="InterPro" id="IPR010985">
    <property type="entry name" value="Ribbon_hlx_hlx"/>
</dbReference>
<dbReference type="NCBIfam" id="TIGR01238">
    <property type="entry name" value="D1pyr5carbox3"/>
    <property type="match status" value="1"/>
</dbReference>
<dbReference type="NCBIfam" id="NF008772">
    <property type="entry name" value="PRK11809.1"/>
    <property type="match status" value="1"/>
</dbReference>
<dbReference type="NCBIfam" id="NF008869">
    <property type="entry name" value="PRK11904.1"/>
    <property type="match status" value="1"/>
</dbReference>
<dbReference type="PANTHER" id="PTHR42862">
    <property type="entry name" value="DELTA-1-PYRROLINE-5-CARBOXYLATE DEHYDROGENASE 1, ISOFORM A-RELATED"/>
    <property type="match status" value="1"/>
</dbReference>
<dbReference type="PANTHER" id="PTHR42862:SF1">
    <property type="entry name" value="DELTA-1-PYRROLINE-5-CARBOXYLATE DEHYDROGENASE 2, ISOFORM A-RELATED"/>
    <property type="match status" value="1"/>
</dbReference>
<dbReference type="Pfam" id="PF00171">
    <property type="entry name" value="Aldedh"/>
    <property type="match status" value="1"/>
</dbReference>
<dbReference type="Pfam" id="PF01619">
    <property type="entry name" value="Pro_dh"/>
    <property type="match status" value="1"/>
</dbReference>
<dbReference type="Pfam" id="PF14850">
    <property type="entry name" value="Pro_dh-DNA_bdg"/>
    <property type="match status" value="1"/>
</dbReference>
<dbReference type="Pfam" id="PF18327">
    <property type="entry name" value="PRODH"/>
    <property type="match status" value="1"/>
</dbReference>
<dbReference type="Pfam" id="PF21775">
    <property type="entry name" value="PutA_1st"/>
    <property type="match status" value="1"/>
</dbReference>
<dbReference type="PIRSF" id="PIRSF000197">
    <property type="entry name" value="Bifunct_PutA"/>
    <property type="match status" value="1"/>
</dbReference>
<dbReference type="SUPFAM" id="SSF53720">
    <property type="entry name" value="ALDH-like"/>
    <property type="match status" value="1"/>
</dbReference>
<dbReference type="SUPFAM" id="SSF51730">
    <property type="entry name" value="FAD-linked oxidoreductase"/>
    <property type="match status" value="1"/>
</dbReference>
<dbReference type="SUPFAM" id="SSF81935">
    <property type="entry name" value="N-terminal domain of bifunctional PutA protein"/>
    <property type="match status" value="1"/>
</dbReference>
<dbReference type="SUPFAM" id="SSF47598">
    <property type="entry name" value="Ribbon-helix-helix"/>
    <property type="match status" value="1"/>
</dbReference>
<dbReference type="PROSITE" id="PS00070">
    <property type="entry name" value="ALDEHYDE_DEHYDR_CYS"/>
    <property type="match status" value="1"/>
</dbReference>
<dbReference type="PROSITE" id="PS00687">
    <property type="entry name" value="ALDEHYDE_DEHYDR_GLU"/>
    <property type="match status" value="1"/>
</dbReference>
<proteinExistence type="inferred from homology"/>
<evidence type="ECO:0000250" key="1"/>
<evidence type="ECO:0000305" key="2"/>
<name>PUTA_KLEAE</name>
<feature type="chain" id="PRO_0000056525" description="Bifunctional protein PutA">
    <location>
        <begin position="1"/>
        <end position="1312"/>
    </location>
</feature>
<feature type="region of interest" description="Proline dehydrogenase">
    <location>
        <begin position="228"/>
        <end position="574"/>
    </location>
</feature>
<feature type="region of interest" description="Aldehyde dehydrogenase">
    <location>
        <begin position="653"/>
        <end position="1119"/>
    </location>
</feature>
<feature type="active site" evidence="1">
    <location>
        <position position="883"/>
    </location>
</feature>
<feature type="active site" evidence="1">
    <location>
        <position position="917"/>
    </location>
</feature>
<sequence length="1312" mass="143857">MGTTTMGVKLDDATRERIKSAASRIDRTPHWLIKQAIFNYLEKLENDETLPELPALLSGAANESDDASEPTEEPYQPFLEFAEQILPQSVRRAAITAAWRRPETDAVPMLLEQARLPQPLGEQAHKLAYQLAEKLRNQKTASGRAGMVQSLLQEFSLSSQEGVALMCLAEALLRIPDKATRDALIRDKISNGNWQSHIGRSPSLFVNAATWGLLFTGKLVSTHNETSLSRSLNRIIGKSGEPLIRKGVDMAMRLMGEQFVTGETIAEALANARKLEEKGFRYSYDMLGEAALTAADAQAYMVSYQQAIHAIGKASNGRGIYEGPGISIKLSALHPRYSRAQYDRVMEELYPRLKSLTLLARQYDIGINIDAEEADRLEISLDLLEKLCFEPELAGWNGIGFVIQAYQKRCPFVIDYLIDLATRSRRRLMIRLVKGAYWDSEIKRAQMEGLEGYPVYTRKVYTDVSYLACAKKLLAVPNLIYPQFATHNAHTLAAIYQLAGQNYYPGQYEFQCLHGMGEPLYEQVVGKVADGKLNRPCRIYAPVGTHETLLAYLVRRLLENGANTSFVNRIADNTLPLDELVADPVSAVEKLAQQEGQAGLPHPKIPLPRDLYGSGRSNSAGLDLANEHRLASLSSSLLNSALHKWQALPMLEQPVAEGEMQPVVNPAEPKDIVGYVREASDAEVQQALTSAINNAPIWFATPPQERAAILERAAVLMESQMPTLMGILVREAGKTFSNAIAEVREAVDFLHYYAGQVRDDFDNETHRPLGPVVCISPWNFPLAIFTGQIAAALAAGNSVLAKPAEQTPLIAAQGVAILLEAGVPPGVIQLLPGRGETVGAALTSDERVRGVMFTGSTEVATLLQRNIASRLDPQGRPTPLIAETGGMNAMIVDSSALTEQVVIDVLASAFDSAGQRCSALRVLCLQEEVADHTLTMLRGAMSECRMGNPGRLTTDIGPVIDAEAKENIERHIQAMRAKGRTVYQAVRENSEDAREWRHGTFVPPTLIELDSFDELKKEVFGPVLHVVRYNRNELDKLVEQINASGYGLTLGVHTRIDETIAQVTGSAKVGNLYVNRNMVGAVVGVQPFGGEGLSGTGPKAGGPLYLYRLLSSRPQDAVGVTFARQDAERPLDAQLKTLLEKPLQALQQWAAGRPELQALCQQYSEQAQSGTQRLLPGPTGERNTLTLMPRERVLCVADNEQDALIQLAAVLAVGCEVLWPDSALQRDLAKKLPREVSERIRFAKAEQLPVQAFDAVIYHGDSDQLRELCEQVAARDGAIVSVQGFARGETNLLLERLYIERSLSVNTAAAGA</sequence>
<protein>
    <recommendedName>
        <fullName>Bifunctional protein PutA</fullName>
    </recommendedName>
    <domain>
        <recommendedName>
            <fullName>Proline dehydrogenase</fullName>
            <ecNumber>1.5.5.2</ecNumber>
        </recommendedName>
        <alternativeName>
            <fullName>Proline oxidase</fullName>
        </alternativeName>
    </domain>
    <domain>
        <recommendedName>
            <fullName>Delta-1-pyrroline-5-carboxylate dehydrogenase</fullName>
            <shortName>P5C dehydrogenase</shortName>
            <ecNumber>1.2.1.88</ecNumber>
        </recommendedName>
        <alternativeName>
            <fullName>L-glutamate gamma-semialdehyde dehydrogenase</fullName>
        </alternativeName>
    </domain>
</protein>
<keyword id="KW-0238">DNA-binding</keyword>
<keyword id="KW-0274">FAD</keyword>
<keyword id="KW-0285">Flavoprotein</keyword>
<keyword id="KW-0511">Multifunctional enzyme</keyword>
<keyword id="KW-0520">NAD</keyword>
<keyword id="KW-0560">Oxidoreductase</keyword>
<keyword id="KW-0642">Proline metabolism</keyword>
<keyword id="KW-0678">Repressor</keyword>
<keyword id="KW-0804">Transcription</keyword>
<keyword id="KW-0805">Transcription regulation</keyword>
<reference key="1">
    <citation type="submission" date="1997-12" db="EMBL/GenBank/DDBJ databases">
        <title>DNA sequence analysis of the putA gene in Klebsiella aerogenes.</title>
        <authorList>
            <person name="Surber M.W."/>
            <person name="Maloy S."/>
        </authorList>
    </citation>
    <scope>NUCLEOTIDE SEQUENCE [GENOMIC DNA]</scope>
    <source>
        <strain>EM450</strain>
    </source>
</reference>
<gene>
    <name type="primary">putA</name>
</gene>
<accession>O52485</accession>
<comment type="function">
    <text evidence="1">Oxidizes proline to glutamate for use as a carbon and nitrogen source and also function as a transcriptional repressor of the put operon.</text>
</comment>
<comment type="catalytic activity">
    <reaction>
        <text>L-proline + a quinone = (S)-1-pyrroline-5-carboxylate + a quinol + H(+)</text>
        <dbReference type="Rhea" id="RHEA:23784"/>
        <dbReference type="ChEBI" id="CHEBI:15378"/>
        <dbReference type="ChEBI" id="CHEBI:17388"/>
        <dbReference type="ChEBI" id="CHEBI:24646"/>
        <dbReference type="ChEBI" id="CHEBI:60039"/>
        <dbReference type="ChEBI" id="CHEBI:132124"/>
        <dbReference type="EC" id="1.5.5.2"/>
    </reaction>
</comment>
<comment type="catalytic activity">
    <reaction>
        <text>L-glutamate 5-semialdehyde + NAD(+) + H2O = L-glutamate + NADH + 2 H(+)</text>
        <dbReference type="Rhea" id="RHEA:30235"/>
        <dbReference type="ChEBI" id="CHEBI:15377"/>
        <dbReference type="ChEBI" id="CHEBI:15378"/>
        <dbReference type="ChEBI" id="CHEBI:29985"/>
        <dbReference type="ChEBI" id="CHEBI:57540"/>
        <dbReference type="ChEBI" id="CHEBI:57945"/>
        <dbReference type="ChEBI" id="CHEBI:58066"/>
        <dbReference type="EC" id="1.2.1.88"/>
    </reaction>
</comment>
<comment type="cofactor">
    <cofactor>
        <name>FAD</name>
        <dbReference type="ChEBI" id="CHEBI:57692"/>
    </cofactor>
</comment>
<comment type="pathway">
    <text>Amino-acid degradation; L-proline degradation into L-glutamate; L-glutamate from L-proline: step 1/2.</text>
</comment>
<comment type="pathway">
    <text>Amino-acid degradation; L-proline degradation into L-glutamate; L-glutamate from L-proline: step 2/2.</text>
</comment>
<comment type="similarity">
    <text evidence="2">In the N-terminal section; belongs to the proline dehydrogenase family.</text>
</comment>
<comment type="similarity">
    <text evidence="2">In the C-terminal section; belongs to the aldehyde dehydrogenase family.</text>
</comment>
<organism>
    <name type="scientific">Klebsiella aerogenes</name>
    <name type="common">Enterobacter aerogenes</name>
    <dbReference type="NCBI Taxonomy" id="548"/>
    <lineage>
        <taxon>Bacteria</taxon>
        <taxon>Pseudomonadati</taxon>
        <taxon>Pseudomonadota</taxon>
        <taxon>Gammaproteobacteria</taxon>
        <taxon>Enterobacterales</taxon>
        <taxon>Enterobacteriaceae</taxon>
        <taxon>Klebsiella/Raoultella group</taxon>
        <taxon>Klebsiella</taxon>
    </lineage>
</organism>